<comment type="function">
    <text evidence="5">Thiol-specific peroxidase that catalyzes the reduction of hydrogen peroxide and organic hydroperoxides to water and alcohols, respectively. Plays a role in cell protection against oxidative stress by detoxifying peroxides. May be an antioxidant enzyme particularly in the developing shoot and photosynthesizing leaf.</text>
</comment>
<comment type="catalytic activity">
    <reaction evidence="5">
        <text>a hydroperoxide + [thioredoxin]-dithiol = an alcohol + [thioredoxin]-disulfide + H2O</text>
        <dbReference type="Rhea" id="RHEA:62620"/>
        <dbReference type="Rhea" id="RHEA-COMP:10698"/>
        <dbReference type="Rhea" id="RHEA-COMP:10700"/>
        <dbReference type="ChEBI" id="CHEBI:15377"/>
        <dbReference type="ChEBI" id="CHEBI:29950"/>
        <dbReference type="ChEBI" id="CHEBI:30879"/>
        <dbReference type="ChEBI" id="CHEBI:35924"/>
        <dbReference type="ChEBI" id="CHEBI:50058"/>
        <dbReference type="EC" id="1.11.1.24"/>
    </reaction>
</comment>
<comment type="subunit">
    <text evidence="2 5 7">Homodimer; disulfide-linked, upon oxidation (By similarity). Interacts with the plastidial thioredoxin CDSP32 (PubMed:12084836). Interacts with the plastidial NADPH-dependent thioredoxin reductase ANTR-C (PubMed:16884685).</text>
</comment>
<comment type="subcellular location">
    <subcellularLocation>
        <location evidence="8">Plastid</location>
        <location evidence="8">Chloroplast</location>
    </subcellularLocation>
</comment>
<comment type="induction">
    <text evidence="6">Down-regulated under highly reduced cellular thiol pool conditions. Down-regulated by ascorbate. Slightly induced by oxidative stress.</text>
</comment>
<comment type="miscellaneous">
    <text evidence="10">The active site is a conserved redox-active cysteine residue, the peroxidatic cysteine (C(P)), which makes the nucleophilic attack on the peroxide substrate. The peroxide oxidizes the C(P)-SH to cysteine sulfenic acid (C(P)-SOH), which then reacts with another cysteine residue, the resolving cysteine (C(R)), to form a disulfide bridge. The disulfide is subsequently reduced by an appropriate electron donor to complete the catalytic cycle. In this typical 2-Cys peroxiredoxin, C(R) is provided by the other dimeric subunit to form an intersubunit disulfide. The disulfide is subsequently reduced by thioredoxin CDSP32.</text>
</comment>
<comment type="similarity">
    <text evidence="9">Belongs to the peroxiredoxin family. AhpC/Prx1 subfamily.</text>
</comment>
<sequence length="266" mass="29092">MASVASSTTLISSPSSRVFPAKSSLSSPSVSFLRTLSSPSASASLRSGFARRSSLSSTSRRSFAVKAQADDLPLVGNKAPDFEAEAVFDQEFIKVKLSDYIGKKYVILFFYPLDFTFVCPTEITAFSDRHSEFEKLNTEVLGVSVDSVFSHLAWVQTDRKSGGLGDLNYPLISDVTKSISKSFGVLIHDQGIALRGLFIIDKEGVIQHSTINNLGIGRSVDETMRTLQALQYIQENPDEVCPAGWKPGEKSMKPDPKLSKEYFSAI</sequence>
<feature type="transit peptide" description="Chloroplast" evidence="1">
    <location>
        <begin position="1"/>
        <end position="65"/>
    </location>
</feature>
<feature type="chain" id="PRO_0000023784" description="2-Cys peroxiredoxin BAS1, chloroplastic">
    <location>
        <begin position="66"/>
        <end position="266"/>
    </location>
</feature>
<feature type="domain" description="Thioredoxin" evidence="3">
    <location>
        <begin position="73"/>
        <end position="232"/>
    </location>
</feature>
<feature type="region of interest" description="Disordered" evidence="4">
    <location>
        <begin position="1"/>
        <end position="25"/>
    </location>
</feature>
<feature type="compositionally biased region" description="Low complexity" evidence="4">
    <location>
        <begin position="1"/>
        <end position="16"/>
    </location>
</feature>
<feature type="active site" description="Cysteine sulfenic acid (-SOH) intermediate" evidence="2">
    <location>
        <position position="119"/>
    </location>
</feature>
<feature type="disulfide bond" description="Interchain (with C-241); in linked form" evidence="2">
    <location>
        <position position="119"/>
    </location>
</feature>
<feature type="disulfide bond" description="Interchain (with C-119); in linked form" evidence="2">
    <location>
        <position position="241"/>
    </location>
</feature>
<feature type="sequence conflict" description="In Ref. 1; CAA63909/CAA71503." evidence="9" ref="1">
    <original>E</original>
    <variation>K</variation>
    <location>
        <position position="83"/>
    </location>
</feature>
<feature type="sequence conflict" description="In Ref. 1 and 2." evidence="9" ref="1 2">
    <original>I</original>
    <variation>N</variation>
    <location>
        <position position="101"/>
    </location>
</feature>
<feature type="sequence conflict" description="In Ref. 1; CAA66484." evidence="9" ref="1">
    <location>
        <position position="122"/>
    </location>
</feature>
<feature type="sequence conflict" description="In Ref. 7; AAM64537." evidence="9" ref="7">
    <original>DV</original>
    <variation>YF</variation>
    <location>
        <begin position="174"/>
        <end position="175"/>
    </location>
</feature>
<feature type="sequence conflict" description="In Ref. 2." evidence="9" ref="2">
    <original>I</original>
    <variation>IGI</variation>
    <location>
        <position position="192"/>
    </location>
</feature>
<feature type="sequence conflict" description="In Ref. 7; AAM64537." evidence="9" ref="7">
    <original>R</original>
    <variation>Q</variation>
    <location>
        <position position="218"/>
    </location>
</feature>
<feature type="sequence conflict" description="In Ref. 1; CAA63909/CAA71503." evidence="9" ref="1">
    <original>IQE</original>
    <variation>TG</variation>
    <location>
        <begin position="233"/>
        <end position="235"/>
    </location>
</feature>
<feature type="sequence conflict" description="In Ref. 1; CAA63909/CAA71503." evidence="9" ref="1">
    <original>P</original>
    <variation>S</variation>
    <location>
        <position position="247"/>
    </location>
</feature>
<feature type="strand" evidence="11">
    <location>
        <begin position="83"/>
        <end position="88"/>
    </location>
</feature>
<feature type="strand" evidence="11">
    <location>
        <begin position="91"/>
        <end position="96"/>
    </location>
</feature>
<feature type="helix" evidence="11">
    <location>
        <begin position="97"/>
        <end position="100"/>
    </location>
</feature>
<feature type="turn" evidence="11">
    <location>
        <begin position="101"/>
        <end position="103"/>
    </location>
</feature>
<feature type="strand" evidence="11">
    <location>
        <begin position="105"/>
        <end position="110"/>
    </location>
</feature>
<feature type="helix" evidence="11">
    <location>
        <begin position="118"/>
        <end position="128"/>
    </location>
</feature>
<feature type="helix" evidence="11">
    <location>
        <begin position="130"/>
        <end position="135"/>
    </location>
</feature>
<feature type="strand" evidence="11">
    <location>
        <begin position="138"/>
        <end position="146"/>
    </location>
</feature>
<feature type="helix" evidence="11">
    <location>
        <begin position="148"/>
        <end position="155"/>
    </location>
</feature>
<feature type="helix" evidence="11">
    <location>
        <begin position="159"/>
        <end position="161"/>
    </location>
</feature>
<feature type="strand" evidence="11">
    <location>
        <begin position="171"/>
        <end position="173"/>
    </location>
</feature>
<feature type="helix" evidence="11">
    <location>
        <begin position="178"/>
        <end position="182"/>
    </location>
</feature>
<feature type="turn" evidence="11">
    <location>
        <begin position="188"/>
        <end position="191"/>
    </location>
</feature>
<feature type="strand" evidence="11">
    <location>
        <begin position="195"/>
        <end position="200"/>
    </location>
</feature>
<feature type="strand" evidence="11">
    <location>
        <begin position="204"/>
        <end position="212"/>
    </location>
</feature>
<feature type="helix" evidence="11">
    <location>
        <begin position="220"/>
        <end position="235"/>
    </location>
</feature>
<feature type="turn" evidence="11">
    <location>
        <begin position="256"/>
        <end position="259"/>
    </location>
</feature>
<feature type="helix" evidence="11">
    <location>
        <begin position="260"/>
        <end position="263"/>
    </location>
</feature>
<name>BAS1A_ARATH</name>
<proteinExistence type="evidence at protein level"/>
<organism>
    <name type="scientific">Arabidopsis thaliana</name>
    <name type="common">Mouse-ear cress</name>
    <dbReference type="NCBI Taxonomy" id="3702"/>
    <lineage>
        <taxon>Eukaryota</taxon>
        <taxon>Viridiplantae</taxon>
        <taxon>Streptophyta</taxon>
        <taxon>Embryophyta</taxon>
        <taxon>Tracheophyta</taxon>
        <taxon>Spermatophyta</taxon>
        <taxon>Magnoliopsida</taxon>
        <taxon>eudicotyledons</taxon>
        <taxon>Gunneridae</taxon>
        <taxon>Pentapetalae</taxon>
        <taxon>rosids</taxon>
        <taxon>malvids</taxon>
        <taxon>Brassicales</taxon>
        <taxon>Brassicaceae</taxon>
        <taxon>Camelineae</taxon>
        <taxon>Arabidopsis</taxon>
    </lineage>
</organism>
<reference key="1">
    <citation type="online journal article" date="1996" name="Plant Gene Register">
        <title>2-Cys peroxiredoxin bas1 from Arabidopsis thaliana.</title>
        <authorList>
            <person name="Baier M."/>
            <person name="Dietz K.-J."/>
        </authorList>
        <locator>PGR96-031</locator>
    </citation>
    <scope>NUCLEOTIDE SEQUENCE [MRNA]</scope>
    <source>
        <strain>cv. Columbia</strain>
    </source>
</reference>
<reference key="2">
    <citation type="journal article" date="1997" name="Plant J.">
        <title>The plant 2-Cys peroxiredoxin BAS1 is a nuclear-encoded chloroplast protein: its expressional regulation, phylogenetic origin, and implications for its specific physiological function in plants.</title>
        <authorList>
            <person name="Baier M."/>
            <person name="Dietz K.-J."/>
        </authorList>
    </citation>
    <scope>NUCLEOTIDE SEQUENCE [GENOMIC DNA / MRNA]</scope>
    <scope>SUBCELLULAR LOCATION</scope>
    <source>
        <strain>cv. Columbia</strain>
    </source>
</reference>
<reference key="3">
    <citation type="submission" date="2000-03" db="EMBL/GenBank/DDBJ databases">
        <authorList>
            <person name="Baier M."/>
        </authorList>
    </citation>
    <scope>SEQUENCE REVISION</scope>
</reference>
<reference key="4">
    <citation type="journal article" date="2000" name="Nature">
        <title>Sequence and analysis of chromosome 3 of the plant Arabidopsis thaliana.</title>
        <authorList>
            <person name="Salanoubat M."/>
            <person name="Lemcke K."/>
            <person name="Rieger M."/>
            <person name="Ansorge W."/>
            <person name="Unseld M."/>
            <person name="Fartmann B."/>
            <person name="Valle G."/>
            <person name="Bloecker H."/>
            <person name="Perez-Alonso M."/>
            <person name="Obermaier B."/>
            <person name="Delseny M."/>
            <person name="Boutry M."/>
            <person name="Grivell L.A."/>
            <person name="Mache R."/>
            <person name="Puigdomenech P."/>
            <person name="De Simone V."/>
            <person name="Choisne N."/>
            <person name="Artiguenave F."/>
            <person name="Robert C."/>
            <person name="Brottier P."/>
            <person name="Wincker P."/>
            <person name="Cattolico L."/>
            <person name="Weissenbach J."/>
            <person name="Saurin W."/>
            <person name="Quetier F."/>
            <person name="Schaefer M."/>
            <person name="Mueller-Auer S."/>
            <person name="Gabel C."/>
            <person name="Fuchs M."/>
            <person name="Benes V."/>
            <person name="Wurmbach E."/>
            <person name="Drzonek H."/>
            <person name="Erfle H."/>
            <person name="Jordan N."/>
            <person name="Bangert S."/>
            <person name="Wiedelmann R."/>
            <person name="Kranz H."/>
            <person name="Voss H."/>
            <person name="Holland R."/>
            <person name="Brandt P."/>
            <person name="Nyakatura G."/>
            <person name="Vezzi A."/>
            <person name="D'Angelo M."/>
            <person name="Pallavicini A."/>
            <person name="Toppo S."/>
            <person name="Simionati B."/>
            <person name="Conrad A."/>
            <person name="Hornischer K."/>
            <person name="Kauer G."/>
            <person name="Loehnert T.-H."/>
            <person name="Nordsiek G."/>
            <person name="Reichelt J."/>
            <person name="Scharfe M."/>
            <person name="Schoen O."/>
            <person name="Bargues M."/>
            <person name="Terol J."/>
            <person name="Climent J."/>
            <person name="Navarro P."/>
            <person name="Collado C."/>
            <person name="Perez-Perez A."/>
            <person name="Ottenwaelder B."/>
            <person name="Duchemin D."/>
            <person name="Cooke R."/>
            <person name="Laudie M."/>
            <person name="Berger-Llauro C."/>
            <person name="Purnelle B."/>
            <person name="Masuy D."/>
            <person name="de Haan M."/>
            <person name="Maarse A.C."/>
            <person name="Alcaraz J.-P."/>
            <person name="Cottet A."/>
            <person name="Casacuberta E."/>
            <person name="Monfort A."/>
            <person name="Argiriou A."/>
            <person name="Flores M."/>
            <person name="Liguori R."/>
            <person name="Vitale D."/>
            <person name="Mannhaupt G."/>
            <person name="Haase D."/>
            <person name="Schoof H."/>
            <person name="Rudd S."/>
            <person name="Zaccaria P."/>
            <person name="Mewes H.-W."/>
            <person name="Mayer K.F.X."/>
            <person name="Kaul S."/>
            <person name="Town C.D."/>
            <person name="Koo H.L."/>
            <person name="Tallon L.J."/>
            <person name="Jenkins J."/>
            <person name="Rooney T."/>
            <person name="Rizzo M."/>
            <person name="Walts A."/>
            <person name="Utterback T."/>
            <person name="Fujii C.Y."/>
            <person name="Shea T.P."/>
            <person name="Creasy T.H."/>
            <person name="Haas B."/>
            <person name="Maiti R."/>
            <person name="Wu D."/>
            <person name="Peterson J."/>
            <person name="Van Aken S."/>
            <person name="Pai G."/>
            <person name="Militscher J."/>
            <person name="Sellers P."/>
            <person name="Gill J.E."/>
            <person name="Feldblyum T.V."/>
            <person name="Preuss D."/>
            <person name="Lin X."/>
            <person name="Nierman W.C."/>
            <person name="Salzberg S.L."/>
            <person name="White O."/>
            <person name="Venter J.C."/>
            <person name="Fraser C.M."/>
            <person name="Kaneko T."/>
            <person name="Nakamura Y."/>
            <person name="Sato S."/>
            <person name="Kato T."/>
            <person name="Asamizu E."/>
            <person name="Sasamoto S."/>
            <person name="Kimura T."/>
            <person name="Idesawa K."/>
            <person name="Kawashima K."/>
            <person name="Kishida Y."/>
            <person name="Kiyokawa C."/>
            <person name="Kohara M."/>
            <person name="Matsumoto M."/>
            <person name="Matsuno A."/>
            <person name="Muraki A."/>
            <person name="Nakayama S."/>
            <person name="Nakazaki N."/>
            <person name="Shinpo S."/>
            <person name="Takeuchi C."/>
            <person name="Wada T."/>
            <person name="Watanabe A."/>
            <person name="Yamada M."/>
            <person name="Yasuda M."/>
            <person name="Tabata S."/>
        </authorList>
    </citation>
    <scope>NUCLEOTIDE SEQUENCE [LARGE SCALE GENOMIC DNA]</scope>
    <source>
        <strain>cv. Columbia</strain>
    </source>
</reference>
<reference key="5">
    <citation type="journal article" date="2017" name="Plant J.">
        <title>Araport11: a complete reannotation of the Arabidopsis thaliana reference genome.</title>
        <authorList>
            <person name="Cheng C.Y."/>
            <person name="Krishnakumar V."/>
            <person name="Chan A.P."/>
            <person name="Thibaud-Nissen F."/>
            <person name="Schobel S."/>
            <person name="Town C.D."/>
        </authorList>
    </citation>
    <scope>GENOME REANNOTATION</scope>
    <source>
        <strain>cv. Columbia</strain>
    </source>
</reference>
<reference key="6">
    <citation type="journal article" date="2003" name="Science">
        <title>Empirical analysis of transcriptional activity in the Arabidopsis genome.</title>
        <authorList>
            <person name="Yamada K."/>
            <person name="Lim J."/>
            <person name="Dale J.M."/>
            <person name="Chen H."/>
            <person name="Shinn P."/>
            <person name="Palm C.J."/>
            <person name="Southwick A.M."/>
            <person name="Wu H.C."/>
            <person name="Kim C.J."/>
            <person name="Nguyen M."/>
            <person name="Pham P.K."/>
            <person name="Cheuk R.F."/>
            <person name="Karlin-Newmann G."/>
            <person name="Liu S.X."/>
            <person name="Lam B."/>
            <person name="Sakano H."/>
            <person name="Wu T."/>
            <person name="Yu G."/>
            <person name="Miranda M."/>
            <person name="Quach H.L."/>
            <person name="Tripp M."/>
            <person name="Chang C.H."/>
            <person name="Lee J.M."/>
            <person name="Toriumi M.J."/>
            <person name="Chan M.M."/>
            <person name="Tang C.C."/>
            <person name="Onodera C.S."/>
            <person name="Deng J.M."/>
            <person name="Akiyama K."/>
            <person name="Ansari Y."/>
            <person name="Arakawa T."/>
            <person name="Banh J."/>
            <person name="Banno F."/>
            <person name="Bowser L."/>
            <person name="Brooks S.Y."/>
            <person name="Carninci P."/>
            <person name="Chao Q."/>
            <person name="Choy N."/>
            <person name="Enju A."/>
            <person name="Goldsmith A.D."/>
            <person name="Gurjal M."/>
            <person name="Hansen N.F."/>
            <person name="Hayashizaki Y."/>
            <person name="Johnson-Hopson C."/>
            <person name="Hsuan V.W."/>
            <person name="Iida K."/>
            <person name="Karnes M."/>
            <person name="Khan S."/>
            <person name="Koesema E."/>
            <person name="Ishida J."/>
            <person name="Jiang P.X."/>
            <person name="Jones T."/>
            <person name="Kawai J."/>
            <person name="Kamiya A."/>
            <person name="Meyers C."/>
            <person name="Nakajima M."/>
            <person name="Narusaka M."/>
            <person name="Seki M."/>
            <person name="Sakurai T."/>
            <person name="Satou M."/>
            <person name="Tamse R."/>
            <person name="Vaysberg M."/>
            <person name="Wallender E.K."/>
            <person name="Wong C."/>
            <person name="Yamamura Y."/>
            <person name="Yuan S."/>
            <person name="Shinozaki K."/>
            <person name="Davis R.W."/>
            <person name="Theologis A."/>
            <person name="Ecker J.R."/>
        </authorList>
    </citation>
    <scope>NUCLEOTIDE SEQUENCE [LARGE SCALE MRNA]</scope>
    <source>
        <strain>cv. Columbia</strain>
    </source>
</reference>
<reference key="7">
    <citation type="submission" date="2002-03" db="EMBL/GenBank/DDBJ databases">
        <title>Full-length cDNA from Arabidopsis thaliana.</title>
        <authorList>
            <person name="Brover V.V."/>
            <person name="Troukhan M.E."/>
            <person name="Alexandrov N.A."/>
            <person name="Lu Y.-P."/>
            <person name="Flavell R.B."/>
            <person name="Feldmann K.A."/>
        </authorList>
    </citation>
    <scope>NUCLEOTIDE SEQUENCE [LARGE SCALE MRNA]</scope>
</reference>
<reference key="8">
    <citation type="journal article" date="2002" name="Plant Cell">
        <title>The plastidic 2-cysteine peroxiredoxin is a target for a thioredoxin involved in the protection of the photosynthetic apparatus against oxidative damage.</title>
        <authorList>
            <person name="Broin M."/>
            <person name="Cuine S."/>
            <person name="Eymery F."/>
            <person name="Rey P."/>
        </authorList>
    </citation>
    <scope>FUNCTION</scope>
    <scope>CATALYTIC ACTIVITY</scope>
    <scope>INTERACTION WITH CDSP32</scope>
</reference>
<reference key="9">
    <citation type="journal article" date="2003" name="Plant Physiol.">
        <title>Divergent light-, ascorbate-, and oxidative stress-dependent regulation of expression of the peroxiredoxin gene family in Arabidopsis.</title>
        <authorList>
            <person name="Horling F."/>
            <person name="Lamkemeyer P."/>
            <person name="Koenig J."/>
            <person name="Finkemeier I."/>
            <person name="Kandlbinder A."/>
            <person name="Baier M."/>
            <person name="Dietz K.-J."/>
        </authorList>
    </citation>
    <scope>INDUCTION</scope>
</reference>
<reference key="10">
    <citation type="journal article" date="2005" name="Free Radic. Biol. Med.">
        <title>The plant multigenic family of thiol peroxidases.</title>
        <authorList>
            <person name="Rouhier N."/>
            <person name="Jacquot J.-P."/>
        </authorList>
    </citation>
    <scope>GENE FAMILY ORGANIZATION</scope>
    <scope>NOMENCLATURE</scope>
</reference>
<reference key="11">
    <citation type="journal article" date="2006" name="Biochem. Biophys. Res. Commun.">
        <title>The C-type Arabidopsis thioredoxin reductase ANTR-C acts as an electron donor to 2-Cys peroxiredoxins in chloroplasts.</title>
        <authorList>
            <person name="Moon J.C."/>
            <person name="Jang H.H."/>
            <person name="Chae H.B."/>
            <person name="Lee J.R."/>
            <person name="Lee S.Y."/>
            <person name="Jung Y.J."/>
            <person name="Shin M.R."/>
            <person name="Lim H.S."/>
            <person name="Chung W.S."/>
            <person name="Yun D.-J."/>
            <person name="Lee K.O."/>
            <person name="Lee S.Y."/>
        </authorList>
    </citation>
    <scope>INTERACTION WITH ANTR-C</scope>
</reference>
<protein>
    <recommendedName>
        <fullName>2-Cys peroxiredoxin BAS1, chloroplastic</fullName>
        <shortName>2-Cys Prx A</shortName>
        <shortName>2-Cys peroxiredoxin A</shortName>
        <ecNumber evidence="5">1.11.1.24</ecNumber>
    </recommendedName>
    <alternativeName>
        <fullName>Thiol-specific antioxidant protein A</fullName>
    </alternativeName>
    <alternativeName>
        <fullName evidence="9">Thioredoxin-dependent peroxiredoxin BAS1</fullName>
    </alternativeName>
</protein>
<gene>
    <name type="primary">BAS1</name>
    <name type="ordered locus">At3g11630</name>
    <name type="ORF">F24K9.28</name>
    <name type="ORF">T19F11.3</name>
</gene>
<keyword id="KW-0002">3D-structure</keyword>
<keyword id="KW-0049">Antioxidant</keyword>
<keyword id="KW-0150">Chloroplast</keyword>
<keyword id="KW-1015">Disulfide bond</keyword>
<keyword id="KW-0560">Oxidoreductase</keyword>
<keyword id="KW-0575">Peroxidase</keyword>
<keyword id="KW-0934">Plastid</keyword>
<keyword id="KW-0676">Redox-active center</keyword>
<keyword id="KW-1185">Reference proteome</keyword>
<keyword id="KW-0809">Transit peptide</keyword>
<dbReference type="EC" id="1.11.1.24" evidence="5"/>
<dbReference type="EMBL" id="X94218">
    <property type="protein sequence ID" value="CAA63909.1"/>
    <property type="molecule type" value="mRNA"/>
</dbReference>
<dbReference type="EMBL" id="Y10478">
    <property type="protein sequence ID" value="CAA71503.1"/>
    <property type="molecule type" value="mRNA"/>
</dbReference>
<dbReference type="EMBL" id="X97910">
    <property type="protein sequence ID" value="CAA66484.2"/>
    <property type="molecule type" value="Genomic_DNA"/>
</dbReference>
<dbReference type="EMBL" id="AC008153">
    <property type="protein sequence ID" value="AAG51430.1"/>
    <property type="molecule type" value="Genomic_DNA"/>
</dbReference>
<dbReference type="EMBL" id="AC009918">
    <property type="protein sequence ID" value="AAF02131.1"/>
    <property type="molecule type" value="Genomic_DNA"/>
</dbReference>
<dbReference type="EMBL" id="CP002686">
    <property type="protein sequence ID" value="AEE75077.1"/>
    <property type="molecule type" value="Genomic_DNA"/>
</dbReference>
<dbReference type="EMBL" id="AF324996">
    <property type="protein sequence ID" value="AAG40348.1"/>
    <property type="molecule type" value="mRNA"/>
</dbReference>
<dbReference type="EMBL" id="AF419578">
    <property type="protein sequence ID" value="AAL31910.1"/>
    <property type="molecule type" value="mRNA"/>
</dbReference>
<dbReference type="EMBL" id="AY079107">
    <property type="protein sequence ID" value="AAL84991.1"/>
    <property type="molecule type" value="mRNA"/>
</dbReference>
<dbReference type="EMBL" id="AY086974">
    <property type="protein sequence ID" value="AAM64537.1"/>
    <property type="molecule type" value="mRNA"/>
</dbReference>
<dbReference type="RefSeq" id="NP_187769.1">
    <property type="nucleotide sequence ID" value="NM_111995.3"/>
</dbReference>
<dbReference type="PDB" id="5ZTE">
    <property type="method" value="X-ray"/>
    <property type="resolution" value="2.60 A"/>
    <property type="chains" value="A/B/C/D/E/F/G/H/I/J=73-266"/>
</dbReference>
<dbReference type="PDBsum" id="5ZTE"/>
<dbReference type="SMR" id="Q96291"/>
<dbReference type="BioGRID" id="5669">
    <property type="interactions" value="131"/>
</dbReference>
<dbReference type="FunCoup" id="Q96291">
    <property type="interactions" value="2817"/>
</dbReference>
<dbReference type="IntAct" id="Q96291">
    <property type="interactions" value="8"/>
</dbReference>
<dbReference type="MINT" id="Q96291"/>
<dbReference type="STRING" id="3702.Q96291"/>
<dbReference type="PeroxiBase" id="4358">
    <property type="entry name" value="At2CysPrx01"/>
</dbReference>
<dbReference type="iPTMnet" id="Q96291"/>
<dbReference type="MetOSite" id="Q96291"/>
<dbReference type="PaxDb" id="3702-AT3G11630.1"/>
<dbReference type="ProteomicsDB" id="241127"/>
<dbReference type="EnsemblPlants" id="AT3G11630.1">
    <property type="protein sequence ID" value="AT3G11630.1"/>
    <property type="gene ID" value="AT3G11630"/>
</dbReference>
<dbReference type="GeneID" id="820335"/>
<dbReference type="Gramene" id="AT3G11630.1">
    <property type="protein sequence ID" value="AT3G11630.1"/>
    <property type="gene ID" value="AT3G11630"/>
</dbReference>
<dbReference type="KEGG" id="ath:AT3G11630"/>
<dbReference type="Araport" id="AT3G11630"/>
<dbReference type="TAIR" id="AT3G11630">
    <property type="gene designation" value="2CPA"/>
</dbReference>
<dbReference type="eggNOG" id="KOG0852">
    <property type="taxonomic scope" value="Eukaryota"/>
</dbReference>
<dbReference type="HOGENOM" id="CLU_042529_21_0_1"/>
<dbReference type="InParanoid" id="Q96291"/>
<dbReference type="OMA" id="RTICVDY"/>
<dbReference type="OrthoDB" id="185659at2759"/>
<dbReference type="PhylomeDB" id="Q96291"/>
<dbReference type="BioCyc" id="ARA:AT3G11630-MONOMER"/>
<dbReference type="CD-CODE" id="4299E36E">
    <property type="entry name" value="Nucleolus"/>
</dbReference>
<dbReference type="PRO" id="PR:Q96291"/>
<dbReference type="Proteomes" id="UP000006548">
    <property type="component" value="Chromosome 3"/>
</dbReference>
<dbReference type="ExpressionAtlas" id="Q96291">
    <property type="expression patterns" value="baseline and differential"/>
</dbReference>
<dbReference type="GO" id="GO:0048046">
    <property type="term" value="C:apoplast"/>
    <property type="evidence" value="ECO:0007005"/>
    <property type="project" value="TAIR"/>
</dbReference>
<dbReference type="GO" id="GO:0009507">
    <property type="term" value="C:chloroplast"/>
    <property type="evidence" value="ECO:0007005"/>
    <property type="project" value="TAIR"/>
</dbReference>
<dbReference type="GO" id="GO:0009941">
    <property type="term" value="C:chloroplast envelope"/>
    <property type="evidence" value="ECO:0007005"/>
    <property type="project" value="TAIR"/>
</dbReference>
<dbReference type="GO" id="GO:0009570">
    <property type="term" value="C:chloroplast stroma"/>
    <property type="evidence" value="ECO:0007005"/>
    <property type="project" value="TAIR"/>
</dbReference>
<dbReference type="GO" id="GO:0005829">
    <property type="term" value="C:cytosol"/>
    <property type="evidence" value="ECO:0007005"/>
    <property type="project" value="TAIR"/>
</dbReference>
<dbReference type="GO" id="GO:0010319">
    <property type="term" value="C:stromule"/>
    <property type="evidence" value="ECO:0000314"/>
    <property type="project" value="TAIR"/>
</dbReference>
<dbReference type="GO" id="GO:0009579">
    <property type="term" value="C:thylakoid"/>
    <property type="evidence" value="ECO:0007005"/>
    <property type="project" value="TAIR"/>
</dbReference>
<dbReference type="GO" id="GO:0004601">
    <property type="term" value="F:peroxidase activity"/>
    <property type="evidence" value="ECO:0000314"/>
    <property type="project" value="UniProtKB"/>
</dbReference>
<dbReference type="GO" id="GO:0051920">
    <property type="term" value="F:peroxiredoxin activity"/>
    <property type="evidence" value="ECO:0000314"/>
    <property type="project" value="TAIR"/>
</dbReference>
<dbReference type="GO" id="GO:1901149">
    <property type="term" value="F:salicylic acid binding"/>
    <property type="evidence" value="ECO:0007005"/>
    <property type="project" value="TAIR"/>
</dbReference>
<dbReference type="GO" id="GO:0140824">
    <property type="term" value="F:thioredoxin-dependent peroxiredoxin activity"/>
    <property type="evidence" value="ECO:0007669"/>
    <property type="project" value="UniProtKB-EC"/>
</dbReference>
<dbReference type="GO" id="GO:0045454">
    <property type="term" value="P:cell redox homeostasis"/>
    <property type="evidence" value="ECO:0000315"/>
    <property type="project" value="TAIR"/>
</dbReference>
<dbReference type="GO" id="GO:0009409">
    <property type="term" value="P:response to cold"/>
    <property type="evidence" value="ECO:0000270"/>
    <property type="project" value="TAIR"/>
</dbReference>
<dbReference type="CDD" id="cd03015">
    <property type="entry name" value="PRX_Typ2cys"/>
    <property type="match status" value="1"/>
</dbReference>
<dbReference type="FunFam" id="3.40.30.10:FF:000063">
    <property type="entry name" value="2-Cys peroxiredoxin BAS1, chloroplastic"/>
    <property type="match status" value="1"/>
</dbReference>
<dbReference type="Gene3D" id="3.40.30.10">
    <property type="entry name" value="Glutaredoxin"/>
    <property type="match status" value="1"/>
</dbReference>
<dbReference type="InterPro" id="IPR000866">
    <property type="entry name" value="AhpC/TSA"/>
</dbReference>
<dbReference type="InterPro" id="IPR050217">
    <property type="entry name" value="Peroxiredoxin"/>
</dbReference>
<dbReference type="InterPro" id="IPR019479">
    <property type="entry name" value="Peroxiredoxin_C"/>
</dbReference>
<dbReference type="InterPro" id="IPR036249">
    <property type="entry name" value="Thioredoxin-like_sf"/>
</dbReference>
<dbReference type="InterPro" id="IPR013766">
    <property type="entry name" value="Thioredoxin_domain"/>
</dbReference>
<dbReference type="PANTHER" id="PTHR10681:SF178">
    <property type="entry name" value="2-CYS PEROXIREDOXIN BAS1, CHLOROPLASTIC"/>
    <property type="match status" value="1"/>
</dbReference>
<dbReference type="PANTHER" id="PTHR10681">
    <property type="entry name" value="THIOREDOXIN PEROXIDASE"/>
    <property type="match status" value="1"/>
</dbReference>
<dbReference type="Pfam" id="PF10417">
    <property type="entry name" value="1-cysPrx_C"/>
    <property type="match status" value="1"/>
</dbReference>
<dbReference type="Pfam" id="PF00578">
    <property type="entry name" value="AhpC-TSA"/>
    <property type="match status" value="1"/>
</dbReference>
<dbReference type="SUPFAM" id="SSF52833">
    <property type="entry name" value="Thioredoxin-like"/>
    <property type="match status" value="1"/>
</dbReference>
<dbReference type="PROSITE" id="PS51352">
    <property type="entry name" value="THIOREDOXIN_2"/>
    <property type="match status" value="1"/>
</dbReference>
<evidence type="ECO:0000250" key="1"/>
<evidence type="ECO:0000250" key="2">
    <source>
        <dbReference type="UniProtKB" id="Q06830"/>
    </source>
</evidence>
<evidence type="ECO:0000255" key="3">
    <source>
        <dbReference type="PROSITE-ProRule" id="PRU00691"/>
    </source>
</evidence>
<evidence type="ECO:0000256" key="4">
    <source>
        <dbReference type="SAM" id="MobiDB-lite"/>
    </source>
</evidence>
<evidence type="ECO:0000269" key="5">
    <source>
    </source>
</evidence>
<evidence type="ECO:0000269" key="6">
    <source>
    </source>
</evidence>
<evidence type="ECO:0000269" key="7">
    <source>
    </source>
</evidence>
<evidence type="ECO:0000269" key="8">
    <source>
    </source>
</evidence>
<evidence type="ECO:0000305" key="9"/>
<evidence type="ECO:0000305" key="10">
    <source>
    </source>
</evidence>
<evidence type="ECO:0007829" key="11">
    <source>
        <dbReference type="PDB" id="5ZTE"/>
    </source>
</evidence>
<accession>Q96291</accession>
<accession>P92938</accession>
<accession>Q8L5U1</accession>
<accession>Q9S7Y0</accession>